<dbReference type="EC" id="2.1.1.192" evidence="1"/>
<dbReference type="EMBL" id="CP000259">
    <property type="protein sequence ID" value="ABF32443.1"/>
    <property type="molecule type" value="Genomic_DNA"/>
</dbReference>
<dbReference type="RefSeq" id="WP_002989074.1">
    <property type="nucleotide sequence ID" value="NC_008021.1"/>
</dbReference>
<dbReference type="SMR" id="Q1JKX6"/>
<dbReference type="KEGG" id="spk:MGAS9429_Spy1256"/>
<dbReference type="HOGENOM" id="CLU_029101_0_1_9"/>
<dbReference type="Proteomes" id="UP000002433">
    <property type="component" value="Chromosome"/>
</dbReference>
<dbReference type="GO" id="GO:0005737">
    <property type="term" value="C:cytoplasm"/>
    <property type="evidence" value="ECO:0007669"/>
    <property type="project" value="UniProtKB-SubCell"/>
</dbReference>
<dbReference type="GO" id="GO:0051539">
    <property type="term" value="F:4 iron, 4 sulfur cluster binding"/>
    <property type="evidence" value="ECO:0007669"/>
    <property type="project" value="UniProtKB-UniRule"/>
</dbReference>
<dbReference type="GO" id="GO:0046872">
    <property type="term" value="F:metal ion binding"/>
    <property type="evidence" value="ECO:0007669"/>
    <property type="project" value="UniProtKB-KW"/>
</dbReference>
<dbReference type="GO" id="GO:0070040">
    <property type="term" value="F:rRNA (adenine(2503)-C2-)-methyltransferase activity"/>
    <property type="evidence" value="ECO:0007669"/>
    <property type="project" value="UniProtKB-UniRule"/>
</dbReference>
<dbReference type="GO" id="GO:0019843">
    <property type="term" value="F:rRNA binding"/>
    <property type="evidence" value="ECO:0007669"/>
    <property type="project" value="UniProtKB-UniRule"/>
</dbReference>
<dbReference type="GO" id="GO:0002935">
    <property type="term" value="F:tRNA (adenine(37)-C2)-methyltransferase activity"/>
    <property type="evidence" value="ECO:0007669"/>
    <property type="project" value="UniProtKB-UniRule"/>
</dbReference>
<dbReference type="GO" id="GO:0000049">
    <property type="term" value="F:tRNA binding"/>
    <property type="evidence" value="ECO:0007669"/>
    <property type="project" value="UniProtKB-UniRule"/>
</dbReference>
<dbReference type="GO" id="GO:0070475">
    <property type="term" value="P:rRNA base methylation"/>
    <property type="evidence" value="ECO:0007669"/>
    <property type="project" value="UniProtKB-UniRule"/>
</dbReference>
<dbReference type="GO" id="GO:0030488">
    <property type="term" value="P:tRNA methylation"/>
    <property type="evidence" value="ECO:0007669"/>
    <property type="project" value="UniProtKB-UniRule"/>
</dbReference>
<dbReference type="CDD" id="cd01335">
    <property type="entry name" value="Radical_SAM"/>
    <property type="match status" value="1"/>
</dbReference>
<dbReference type="FunFam" id="3.20.20.70:FF:000014">
    <property type="entry name" value="Probable dual-specificity RNA methyltransferase RlmN"/>
    <property type="match status" value="1"/>
</dbReference>
<dbReference type="Gene3D" id="1.10.150.530">
    <property type="match status" value="1"/>
</dbReference>
<dbReference type="Gene3D" id="3.20.20.70">
    <property type="entry name" value="Aldolase class I"/>
    <property type="match status" value="1"/>
</dbReference>
<dbReference type="HAMAP" id="MF_01849">
    <property type="entry name" value="RNA_methyltr_RlmN"/>
    <property type="match status" value="1"/>
</dbReference>
<dbReference type="InterPro" id="IPR013785">
    <property type="entry name" value="Aldolase_TIM"/>
</dbReference>
<dbReference type="InterPro" id="IPR040072">
    <property type="entry name" value="Methyltransferase_A"/>
</dbReference>
<dbReference type="InterPro" id="IPR048641">
    <property type="entry name" value="RlmN_N"/>
</dbReference>
<dbReference type="InterPro" id="IPR027492">
    <property type="entry name" value="RNA_MTrfase_RlmN"/>
</dbReference>
<dbReference type="InterPro" id="IPR004383">
    <property type="entry name" value="rRNA_lsu_MTrfase_RlmN/Cfr"/>
</dbReference>
<dbReference type="InterPro" id="IPR007197">
    <property type="entry name" value="rSAM"/>
</dbReference>
<dbReference type="NCBIfam" id="TIGR00048">
    <property type="entry name" value="rRNA_mod_RlmN"/>
    <property type="match status" value="1"/>
</dbReference>
<dbReference type="PANTHER" id="PTHR30544">
    <property type="entry name" value="23S RRNA METHYLTRANSFERASE"/>
    <property type="match status" value="1"/>
</dbReference>
<dbReference type="PANTHER" id="PTHR30544:SF5">
    <property type="entry name" value="RADICAL SAM CORE DOMAIN-CONTAINING PROTEIN"/>
    <property type="match status" value="1"/>
</dbReference>
<dbReference type="Pfam" id="PF04055">
    <property type="entry name" value="Radical_SAM"/>
    <property type="match status" value="1"/>
</dbReference>
<dbReference type="Pfam" id="PF21016">
    <property type="entry name" value="RlmN_N"/>
    <property type="match status" value="1"/>
</dbReference>
<dbReference type="PIRSF" id="PIRSF006004">
    <property type="entry name" value="CHP00048"/>
    <property type="match status" value="1"/>
</dbReference>
<dbReference type="SFLD" id="SFLDF00275">
    <property type="entry name" value="adenosine_C2_methyltransferase"/>
    <property type="match status" value="1"/>
</dbReference>
<dbReference type="SFLD" id="SFLDG01062">
    <property type="entry name" value="methyltransferase_(Class_A)"/>
    <property type="match status" value="1"/>
</dbReference>
<dbReference type="SUPFAM" id="SSF102114">
    <property type="entry name" value="Radical SAM enzymes"/>
    <property type="match status" value="1"/>
</dbReference>
<dbReference type="PROSITE" id="PS51918">
    <property type="entry name" value="RADICAL_SAM"/>
    <property type="match status" value="1"/>
</dbReference>
<gene>
    <name evidence="1" type="primary">rlmN</name>
    <name type="ordered locus">MGAS9429_Spy1256</name>
</gene>
<evidence type="ECO:0000255" key="1">
    <source>
        <dbReference type="HAMAP-Rule" id="MF_01849"/>
    </source>
</evidence>
<evidence type="ECO:0000255" key="2">
    <source>
        <dbReference type="PROSITE-ProRule" id="PRU01266"/>
    </source>
</evidence>
<organism>
    <name type="scientific">Streptococcus pyogenes serotype M12 (strain MGAS9429)</name>
    <dbReference type="NCBI Taxonomy" id="370551"/>
    <lineage>
        <taxon>Bacteria</taxon>
        <taxon>Bacillati</taxon>
        <taxon>Bacillota</taxon>
        <taxon>Bacilli</taxon>
        <taxon>Lactobacillales</taxon>
        <taxon>Streptococcaceae</taxon>
        <taxon>Streptococcus</taxon>
    </lineage>
</organism>
<accession>Q1JKX6</accession>
<proteinExistence type="inferred from homology"/>
<keyword id="KW-0004">4Fe-4S</keyword>
<keyword id="KW-0963">Cytoplasm</keyword>
<keyword id="KW-1015">Disulfide bond</keyword>
<keyword id="KW-0408">Iron</keyword>
<keyword id="KW-0411">Iron-sulfur</keyword>
<keyword id="KW-0479">Metal-binding</keyword>
<keyword id="KW-0489">Methyltransferase</keyword>
<keyword id="KW-0698">rRNA processing</keyword>
<keyword id="KW-0949">S-adenosyl-L-methionine</keyword>
<keyword id="KW-0808">Transferase</keyword>
<keyword id="KW-0819">tRNA processing</keyword>
<feature type="chain" id="PRO_0000350460" description="Probable dual-specificity RNA methyltransferase RlmN">
    <location>
        <begin position="1"/>
        <end position="359"/>
    </location>
</feature>
<feature type="domain" description="Radical SAM core" evidence="2">
    <location>
        <begin position="97"/>
        <end position="335"/>
    </location>
</feature>
<feature type="active site" description="Proton acceptor" evidence="1">
    <location>
        <position position="91"/>
    </location>
</feature>
<feature type="active site" description="S-methylcysteine intermediate" evidence="1">
    <location>
        <position position="340"/>
    </location>
</feature>
<feature type="binding site" evidence="1">
    <location>
        <position position="111"/>
    </location>
    <ligand>
        <name>[4Fe-4S] cluster</name>
        <dbReference type="ChEBI" id="CHEBI:49883"/>
        <note>4Fe-4S-S-AdoMet</note>
    </ligand>
</feature>
<feature type="binding site" evidence="1">
    <location>
        <position position="115"/>
    </location>
    <ligand>
        <name>[4Fe-4S] cluster</name>
        <dbReference type="ChEBI" id="CHEBI:49883"/>
        <note>4Fe-4S-S-AdoMet</note>
    </ligand>
</feature>
<feature type="binding site" evidence="1">
    <location>
        <position position="118"/>
    </location>
    <ligand>
        <name>[4Fe-4S] cluster</name>
        <dbReference type="ChEBI" id="CHEBI:49883"/>
        <note>4Fe-4S-S-AdoMet</note>
    </ligand>
</feature>
<feature type="binding site" evidence="1">
    <location>
        <begin position="163"/>
        <end position="164"/>
    </location>
    <ligand>
        <name>S-adenosyl-L-methionine</name>
        <dbReference type="ChEBI" id="CHEBI:59789"/>
    </ligand>
</feature>
<feature type="binding site" evidence="1">
    <location>
        <position position="195"/>
    </location>
    <ligand>
        <name>S-adenosyl-L-methionine</name>
        <dbReference type="ChEBI" id="CHEBI:59789"/>
    </ligand>
</feature>
<feature type="binding site" evidence="1">
    <location>
        <begin position="218"/>
        <end position="220"/>
    </location>
    <ligand>
        <name>S-adenosyl-L-methionine</name>
        <dbReference type="ChEBI" id="CHEBI:59789"/>
    </ligand>
</feature>
<feature type="binding site" evidence="1">
    <location>
        <position position="296"/>
    </location>
    <ligand>
        <name>S-adenosyl-L-methionine</name>
        <dbReference type="ChEBI" id="CHEBI:59789"/>
    </ligand>
</feature>
<feature type="disulfide bond" description="(transient)" evidence="1">
    <location>
        <begin position="104"/>
        <end position="340"/>
    </location>
</feature>
<reference key="1">
    <citation type="journal article" date="2006" name="Proc. Natl. Acad. Sci. U.S.A.">
        <title>Molecular genetic anatomy of inter- and intraserotype variation in the human bacterial pathogen group A Streptococcus.</title>
        <authorList>
            <person name="Beres S.B."/>
            <person name="Richter E.W."/>
            <person name="Nagiec M.J."/>
            <person name="Sumby P."/>
            <person name="Porcella S.F."/>
            <person name="DeLeo F.R."/>
            <person name="Musser J.M."/>
        </authorList>
    </citation>
    <scope>NUCLEOTIDE SEQUENCE [LARGE SCALE GENOMIC DNA]</scope>
    <source>
        <strain>MGAS9429</strain>
    </source>
</reference>
<comment type="function">
    <text evidence="1">Specifically methylates position 2 of adenine 2503 in 23S rRNA and position 2 of adenine 37 in tRNAs.</text>
</comment>
<comment type="catalytic activity">
    <reaction evidence="1">
        <text>adenosine(2503) in 23S rRNA + 2 reduced [2Fe-2S]-[ferredoxin] + 2 S-adenosyl-L-methionine = 2-methyladenosine(2503) in 23S rRNA + 5'-deoxyadenosine + L-methionine + 2 oxidized [2Fe-2S]-[ferredoxin] + S-adenosyl-L-homocysteine</text>
        <dbReference type="Rhea" id="RHEA:42916"/>
        <dbReference type="Rhea" id="RHEA-COMP:10000"/>
        <dbReference type="Rhea" id="RHEA-COMP:10001"/>
        <dbReference type="Rhea" id="RHEA-COMP:10152"/>
        <dbReference type="Rhea" id="RHEA-COMP:10282"/>
        <dbReference type="ChEBI" id="CHEBI:17319"/>
        <dbReference type="ChEBI" id="CHEBI:33737"/>
        <dbReference type="ChEBI" id="CHEBI:33738"/>
        <dbReference type="ChEBI" id="CHEBI:57844"/>
        <dbReference type="ChEBI" id="CHEBI:57856"/>
        <dbReference type="ChEBI" id="CHEBI:59789"/>
        <dbReference type="ChEBI" id="CHEBI:74411"/>
        <dbReference type="ChEBI" id="CHEBI:74497"/>
        <dbReference type="EC" id="2.1.1.192"/>
    </reaction>
</comment>
<comment type="catalytic activity">
    <reaction evidence="1">
        <text>adenosine(37) in tRNA + 2 reduced [2Fe-2S]-[ferredoxin] + 2 S-adenosyl-L-methionine = 2-methyladenosine(37) in tRNA + 5'-deoxyadenosine + L-methionine + 2 oxidized [2Fe-2S]-[ferredoxin] + S-adenosyl-L-homocysteine</text>
        <dbReference type="Rhea" id="RHEA:43332"/>
        <dbReference type="Rhea" id="RHEA-COMP:10000"/>
        <dbReference type="Rhea" id="RHEA-COMP:10001"/>
        <dbReference type="Rhea" id="RHEA-COMP:10162"/>
        <dbReference type="Rhea" id="RHEA-COMP:10485"/>
        <dbReference type="ChEBI" id="CHEBI:17319"/>
        <dbReference type="ChEBI" id="CHEBI:33737"/>
        <dbReference type="ChEBI" id="CHEBI:33738"/>
        <dbReference type="ChEBI" id="CHEBI:57844"/>
        <dbReference type="ChEBI" id="CHEBI:57856"/>
        <dbReference type="ChEBI" id="CHEBI:59789"/>
        <dbReference type="ChEBI" id="CHEBI:74411"/>
        <dbReference type="ChEBI" id="CHEBI:74497"/>
        <dbReference type="EC" id="2.1.1.192"/>
    </reaction>
</comment>
<comment type="cofactor">
    <cofactor evidence="1">
        <name>[4Fe-4S] cluster</name>
        <dbReference type="ChEBI" id="CHEBI:49883"/>
    </cofactor>
    <text evidence="1">Binds 1 [4Fe-4S] cluster. The cluster is coordinated with 3 cysteines and an exchangeable S-adenosyl-L-methionine.</text>
</comment>
<comment type="subcellular location">
    <subcellularLocation>
        <location evidence="1">Cytoplasm</location>
    </subcellularLocation>
</comment>
<comment type="miscellaneous">
    <text evidence="1">Reaction proceeds by a ping-pong mechanism involving intermediate methylation of a conserved cysteine residue.</text>
</comment>
<comment type="similarity">
    <text evidence="1">Belongs to the radical SAM superfamily. RlmN family.</text>
</comment>
<name>RLMN_STRPC</name>
<protein>
    <recommendedName>
        <fullName evidence="1">Probable dual-specificity RNA methyltransferase RlmN</fullName>
        <ecNumber evidence="1">2.1.1.192</ecNumber>
    </recommendedName>
    <alternativeName>
        <fullName evidence="1">23S rRNA (adenine(2503)-C(2))-methyltransferase</fullName>
    </alternativeName>
    <alternativeName>
        <fullName evidence="1">23S rRNA m2A2503 methyltransferase</fullName>
    </alternativeName>
    <alternativeName>
        <fullName evidence="1">Ribosomal RNA large subunit methyltransferase N</fullName>
    </alternativeName>
    <alternativeName>
        <fullName evidence="1">tRNA (adenine(37)-C(2))-methyltransferase</fullName>
    </alternativeName>
    <alternativeName>
        <fullName evidence="1">tRNA m2A37 methyltransferase</fullName>
    </alternativeName>
</protein>
<sequence>MKPSIYSLTRDELIAWAVERGQKQFRATQIWDWLYKKRVQSFEEMTNISKDFVSILNDSFCVNPLKQRVVQESADGTVKYLFELPDGMLIETVLMRQHYGHSVCVTTQVGCNIGCTFCASGLIKKQRDLNSGEITAQIMLVQKYFDDRKQGERVSHVVVMGIGEPFDNYKNVMCFLRVINDDNGLAIGARHITVSTSGLAHKIRDFANEGVQVNLAVSLHAPNNDLRSRIMRVNRSFPLEKLFSAIEYYIEKTNRRVTFEYIMLNEVNDSIKQAQELADLTKTIRKLSYVNLIPYNPVSEHDQYSRSLKERVLAFYDVLKKNGVNCVVRQEHGTDIDAACGQLRSKTMKKDREKVTATK</sequence>